<proteinExistence type="inferred from homology"/>
<name>NTPP_NOCFA</name>
<gene>
    <name type="ordered locus">NFA_9920</name>
</gene>
<accession>Q5Z154</accession>
<evidence type="ECO:0000255" key="1">
    <source>
        <dbReference type="HAMAP-Rule" id="MF_00528"/>
    </source>
</evidence>
<comment type="function">
    <text evidence="1">Nucleoside triphosphate pyrophosphatase. May have a dual role in cell division arrest and in preventing the incorporation of modified nucleotides into cellular nucleic acids.</text>
</comment>
<comment type="catalytic activity">
    <reaction evidence="1">
        <text>a ribonucleoside 5'-triphosphate + H2O = a ribonucleoside 5'-phosphate + diphosphate + H(+)</text>
        <dbReference type="Rhea" id="RHEA:23996"/>
        <dbReference type="ChEBI" id="CHEBI:15377"/>
        <dbReference type="ChEBI" id="CHEBI:15378"/>
        <dbReference type="ChEBI" id="CHEBI:33019"/>
        <dbReference type="ChEBI" id="CHEBI:58043"/>
        <dbReference type="ChEBI" id="CHEBI:61557"/>
        <dbReference type="EC" id="3.6.1.9"/>
    </reaction>
</comment>
<comment type="catalytic activity">
    <reaction evidence="1">
        <text>a 2'-deoxyribonucleoside 5'-triphosphate + H2O = a 2'-deoxyribonucleoside 5'-phosphate + diphosphate + H(+)</text>
        <dbReference type="Rhea" id="RHEA:44644"/>
        <dbReference type="ChEBI" id="CHEBI:15377"/>
        <dbReference type="ChEBI" id="CHEBI:15378"/>
        <dbReference type="ChEBI" id="CHEBI:33019"/>
        <dbReference type="ChEBI" id="CHEBI:61560"/>
        <dbReference type="ChEBI" id="CHEBI:65317"/>
        <dbReference type="EC" id="3.6.1.9"/>
    </reaction>
</comment>
<comment type="cofactor">
    <cofactor evidence="1">
        <name>a divalent metal cation</name>
        <dbReference type="ChEBI" id="CHEBI:60240"/>
    </cofactor>
</comment>
<comment type="subcellular location">
    <subcellularLocation>
        <location evidence="1">Cytoplasm</location>
    </subcellularLocation>
</comment>
<comment type="similarity">
    <text evidence="1">Belongs to the Maf family.</text>
</comment>
<dbReference type="EC" id="3.6.1.9" evidence="1"/>
<dbReference type="EMBL" id="AP006618">
    <property type="protein sequence ID" value="BAD55837.1"/>
    <property type="molecule type" value="Genomic_DNA"/>
</dbReference>
<dbReference type="RefSeq" id="WP_011207522.1">
    <property type="nucleotide sequence ID" value="NC_006361.1"/>
</dbReference>
<dbReference type="SMR" id="Q5Z154"/>
<dbReference type="STRING" id="247156.NFA_9920"/>
<dbReference type="GeneID" id="61131813"/>
<dbReference type="KEGG" id="nfa:NFA_9920"/>
<dbReference type="eggNOG" id="COG0424">
    <property type="taxonomic scope" value="Bacteria"/>
</dbReference>
<dbReference type="HOGENOM" id="CLU_040416_1_2_11"/>
<dbReference type="OrthoDB" id="3527985at2"/>
<dbReference type="Proteomes" id="UP000006820">
    <property type="component" value="Chromosome"/>
</dbReference>
<dbReference type="GO" id="GO:0005737">
    <property type="term" value="C:cytoplasm"/>
    <property type="evidence" value="ECO:0007669"/>
    <property type="project" value="UniProtKB-SubCell"/>
</dbReference>
<dbReference type="GO" id="GO:0047429">
    <property type="term" value="F:nucleoside triphosphate diphosphatase activity"/>
    <property type="evidence" value="ECO:0007669"/>
    <property type="project" value="UniProtKB-EC"/>
</dbReference>
<dbReference type="GO" id="GO:0009117">
    <property type="term" value="P:nucleotide metabolic process"/>
    <property type="evidence" value="ECO:0007669"/>
    <property type="project" value="UniProtKB-KW"/>
</dbReference>
<dbReference type="CDD" id="cd00555">
    <property type="entry name" value="Maf"/>
    <property type="match status" value="1"/>
</dbReference>
<dbReference type="Gene3D" id="3.90.950.10">
    <property type="match status" value="1"/>
</dbReference>
<dbReference type="HAMAP" id="MF_00528">
    <property type="entry name" value="Maf"/>
    <property type="match status" value="1"/>
</dbReference>
<dbReference type="InterPro" id="IPR029001">
    <property type="entry name" value="ITPase-like_fam"/>
</dbReference>
<dbReference type="InterPro" id="IPR003697">
    <property type="entry name" value="Maf-like"/>
</dbReference>
<dbReference type="NCBIfam" id="TIGR00172">
    <property type="entry name" value="maf"/>
    <property type="match status" value="1"/>
</dbReference>
<dbReference type="PANTHER" id="PTHR43213">
    <property type="entry name" value="BIFUNCTIONAL DTTP/UTP PYROPHOSPHATASE/METHYLTRANSFERASE PROTEIN-RELATED"/>
    <property type="match status" value="1"/>
</dbReference>
<dbReference type="PANTHER" id="PTHR43213:SF5">
    <property type="entry name" value="BIFUNCTIONAL DTTP_UTP PYROPHOSPHATASE_METHYLTRANSFERASE PROTEIN-RELATED"/>
    <property type="match status" value="1"/>
</dbReference>
<dbReference type="Pfam" id="PF02545">
    <property type="entry name" value="Maf"/>
    <property type="match status" value="1"/>
</dbReference>
<dbReference type="PIRSF" id="PIRSF006305">
    <property type="entry name" value="Maf"/>
    <property type="match status" value="1"/>
</dbReference>
<dbReference type="SUPFAM" id="SSF52972">
    <property type="entry name" value="ITPase-like"/>
    <property type="match status" value="1"/>
</dbReference>
<organism>
    <name type="scientific">Nocardia farcinica (strain IFM 10152)</name>
    <dbReference type="NCBI Taxonomy" id="247156"/>
    <lineage>
        <taxon>Bacteria</taxon>
        <taxon>Bacillati</taxon>
        <taxon>Actinomycetota</taxon>
        <taxon>Actinomycetes</taxon>
        <taxon>Mycobacteriales</taxon>
        <taxon>Nocardiaceae</taxon>
        <taxon>Nocardia</taxon>
    </lineage>
</organism>
<feature type="chain" id="PRO_0000267359" description="Nucleoside triphosphate pyrophosphatase">
    <location>
        <begin position="1"/>
        <end position="212"/>
    </location>
</feature>
<feature type="active site" description="Proton acceptor" evidence="1">
    <location>
        <position position="79"/>
    </location>
</feature>
<sequence length="212" mass="21973">MTSTLVLASASPARRQVLRAAGIDPVVRVSDVDEDAVAAALPPDTAPATVVVELARAKAAAVAADIPEYAADCVVVGCDSMLLLDGELQGKPHTPEVARARWAQMAGRSAELVTGHCVLRLRGGAVVAEATDCSATTVHFAKPEPEELDAYLASGEPLQVAGAFTLDGLGGWFVDRIEGDPSSVIGIGLPLLRRLLGDVGVGVAQLWRHPAR</sequence>
<reference key="1">
    <citation type="journal article" date="2004" name="Proc. Natl. Acad. Sci. U.S.A.">
        <title>The complete genomic sequence of Nocardia farcinica IFM 10152.</title>
        <authorList>
            <person name="Ishikawa J."/>
            <person name="Yamashita A."/>
            <person name="Mikami Y."/>
            <person name="Hoshino Y."/>
            <person name="Kurita H."/>
            <person name="Hotta K."/>
            <person name="Shiba T."/>
            <person name="Hattori M."/>
        </authorList>
    </citation>
    <scope>NUCLEOTIDE SEQUENCE [LARGE SCALE GENOMIC DNA]</scope>
    <source>
        <strain>IFM 10152</strain>
    </source>
</reference>
<protein>
    <recommendedName>
        <fullName evidence="1">Nucleoside triphosphate pyrophosphatase</fullName>
        <ecNumber evidence="1">3.6.1.9</ecNumber>
    </recommendedName>
    <alternativeName>
        <fullName evidence="1">Nucleotide pyrophosphatase</fullName>
        <shortName evidence="1">Nucleotide PPase</shortName>
    </alternativeName>
</protein>
<keyword id="KW-0963">Cytoplasm</keyword>
<keyword id="KW-0378">Hydrolase</keyword>
<keyword id="KW-0546">Nucleotide metabolism</keyword>
<keyword id="KW-1185">Reference proteome</keyword>